<gene>
    <name type="primary">nop9</name>
    <name type="ORF">PMAA_023310</name>
</gene>
<dbReference type="EMBL" id="DS995899">
    <property type="protein sequence ID" value="EEA27456.1"/>
    <property type="molecule type" value="Genomic_DNA"/>
</dbReference>
<dbReference type="RefSeq" id="XP_002143971.1">
    <property type="nucleotide sequence ID" value="XM_002143935.1"/>
</dbReference>
<dbReference type="SMR" id="B6Q5P5"/>
<dbReference type="STRING" id="441960.B6Q5P5"/>
<dbReference type="VEuPathDB" id="FungiDB:PMAA_023310"/>
<dbReference type="HOGENOM" id="CLU_008720_1_1_1"/>
<dbReference type="OrthoDB" id="6112at28568"/>
<dbReference type="PhylomeDB" id="B6Q5P5"/>
<dbReference type="Proteomes" id="UP000001294">
    <property type="component" value="Unassembled WGS sequence"/>
</dbReference>
<dbReference type="GO" id="GO:0030686">
    <property type="term" value="C:90S preribosome"/>
    <property type="evidence" value="ECO:0007669"/>
    <property type="project" value="TreeGrafter"/>
</dbReference>
<dbReference type="GO" id="GO:0005730">
    <property type="term" value="C:nucleolus"/>
    <property type="evidence" value="ECO:0007669"/>
    <property type="project" value="UniProtKB-SubCell"/>
</dbReference>
<dbReference type="GO" id="GO:0030688">
    <property type="term" value="C:preribosome, small subunit precursor"/>
    <property type="evidence" value="ECO:0007669"/>
    <property type="project" value="TreeGrafter"/>
</dbReference>
<dbReference type="GO" id="GO:0003723">
    <property type="term" value="F:RNA binding"/>
    <property type="evidence" value="ECO:0007669"/>
    <property type="project" value="InterPro"/>
</dbReference>
<dbReference type="GO" id="GO:0000480">
    <property type="term" value="P:endonucleolytic cleavage in 5'-ETS of tricistronic rRNA transcript (SSU-rRNA, 5.8S rRNA, LSU-rRNA)"/>
    <property type="evidence" value="ECO:0007669"/>
    <property type="project" value="TreeGrafter"/>
</dbReference>
<dbReference type="GO" id="GO:0000447">
    <property type="term" value="P:endonucleolytic cleavage in ITS1 to separate SSU-rRNA from 5.8S rRNA and LSU-rRNA from tricistronic rRNA transcript (SSU-rRNA, 5.8S rRNA, LSU-rRNA)"/>
    <property type="evidence" value="ECO:0007669"/>
    <property type="project" value="TreeGrafter"/>
</dbReference>
<dbReference type="GO" id="GO:0000472">
    <property type="term" value="P:endonucleolytic cleavage to generate mature 5'-end of SSU-rRNA from (SSU-rRNA, 5.8S rRNA, LSU-rRNA)"/>
    <property type="evidence" value="ECO:0007669"/>
    <property type="project" value="TreeGrafter"/>
</dbReference>
<dbReference type="GO" id="GO:0000056">
    <property type="term" value="P:ribosomal small subunit export from nucleus"/>
    <property type="evidence" value="ECO:0007669"/>
    <property type="project" value="TreeGrafter"/>
</dbReference>
<dbReference type="Gene3D" id="1.25.10.10">
    <property type="entry name" value="Leucine-rich Repeat Variant"/>
    <property type="match status" value="3"/>
</dbReference>
<dbReference type="InterPro" id="IPR011989">
    <property type="entry name" value="ARM-like"/>
</dbReference>
<dbReference type="InterPro" id="IPR016024">
    <property type="entry name" value="ARM-type_fold"/>
</dbReference>
<dbReference type="InterPro" id="IPR040000">
    <property type="entry name" value="NOP9"/>
</dbReference>
<dbReference type="InterPro" id="IPR001313">
    <property type="entry name" value="Pumilio_RNA-bd_rpt"/>
</dbReference>
<dbReference type="PANTHER" id="PTHR13102">
    <property type="entry name" value="NUCLEOLAR PROTEIN 9"/>
    <property type="match status" value="1"/>
</dbReference>
<dbReference type="PANTHER" id="PTHR13102:SF0">
    <property type="entry name" value="NUCLEOLAR PROTEIN 9"/>
    <property type="match status" value="1"/>
</dbReference>
<dbReference type="Pfam" id="PF22493">
    <property type="entry name" value="PUF_NOP9"/>
    <property type="match status" value="1"/>
</dbReference>
<dbReference type="SMART" id="SM00025">
    <property type="entry name" value="Pumilio"/>
    <property type="match status" value="7"/>
</dbReference>
<dbReference type="SUPFAM" id="SSF48371">
    <property type="entry name" value="ARM repeat"/>
    <property type="match status" value="1"/>
</dbReference>
<feature type="chain" id="PRO_0000407825" description="Nucleolar protein 9">
    <location>
        <begin position="1"/>
        <end position="697"/>
    </location>
</feature>
<feature type="repeat" description="Pumilio 1">
    <location>
        <begin position="113"/>
        <end position="148"/>
    </location>
</feature>
<feature type="repeat" description="Pumilio 2">
    <location>
        <begin position="149"/>
        <end position="192"/>
    </location>
</feature>
<feature type="repeat" description="Pumilio 3">
    <location>
        <begin position="213"/>
        <end position="248"/>
    </location>
</feature>
<feature type="repeat" description="Pumilio 4">
    <location>
        <begin position="353"/>
        <end position="388"/>
    </location>
</feature>
<feature type="repeat" description="Pumilio 5">
    <location>
        <begin position="389"/>
        <end position="429"/>
    </location>
</feature>
<feature type="repeat" description="Pumilio 6">
    <location>
        <begin position="533"/>
        <end position="574"/>
    </location>
</feature>
<feature type="repeat" description="Pumilio 7">
    <location>
        <begin position="575"/>
        <end position="612"/>
    </location>
</feature>
<feature type="region of interest" description="Disordered" evidence="2">
    <location>
        <begin position="1"/>
        <end position="52"/>
    </location>
</feature>
<feature type="region of interest" description="Disordered" evidence="2">
    <location>
        <begin position="484"/>
        <end position="505"/>
    </location>
</feature>
<feature type="region of interest" description="Disordered" evidence="2">
    <location>
        <begin position="664"/>
        <end position="697"/>
    </location>
</feature>
<feature type="compositionally biased region" description="Basic residues" evidence="2">
    <location>
        <begin position="1"/>
        <end position="10"/>
    </location>
</feature>
<feature type="compositionally biased region" description="Basic and acidic residues" evidence="2">
    <location>
        <begin position="11"/>
        <end position="34"/>
    </location>
</feature>
<feature type="compositionally biased region" description="Basic and acidic residues" evidence="2">
    <location>
        <begin position="665"/>
        <end position="682"/>
    </location>
</feature>
<organism>
    <name type="scientific">Talaromyces marneffei (strain ATCC 18224 / CBS 334.59 / QM 7333)</name>
    <name type="common">Penicillium marneffei</name>
    <dbReference type="NCBI Taxonomy" id="441960"/>
    <lineage>
        <taxon>Eukaryota</taxon>
        <taxon>Fungi</taxon>
        <taxon>Dikarya</taxon>
        <taxon>Ascomycota</taxon>
        <taxon>Pezizomycotina</taxon>
        <taxon>Eurotiomycetes</taxon>
        <taxon>Eurotiomycetidae</taxon>
        <taxon>Eurotiales</taxon>
        <taxon>Trichocomaceae</taxon>
        <taxon>Talaromyces</taxon>
        <taxon>Talaromyces sect. Talaromyces</taxon>
    </lineage>
</organism>
<protein>
    <recommendedName>
        <fullName>Nucleolar protein 9</fullName>
    </recommendedName>
    <alternativeName>
        <fullName>Pumilio domain-containing protein nop9</fullName>
    </alternativeName>
</protein>
<proteinExistence type="inferred from homology"/>
<evidence type="ECO:0000250" key="1"/>
<evidence type="ECO:0000256" key="2">
    <source>
        <dbReference type="SAM" id="MobiDB-lite"/>
    </source>
</evidence>
<evidence type="ECO:0000305" key="3"/>
<accession>B6Q5P5</accession>
<keyword id="KW-0539">Nucleus</keyword>
<keyword id="KW-1185">Reference proteome</keyword>
<keyword id="KW-0677">Repeat</keyword>
<keyword id="KW-0690">Ribosome biogenesis</keyword>
<keyword id="KW-0698">rRNA processing</keyword>
<comment type="function">
    <text evidence="1">RNA-binding nucleolar protein required for pre-rRNA processing. Involved in production of 18S rRNA and assembly of small ribosomal subunit (By similarity).</text>
</comment>
<comment type="subcellular location">
    <subcellularLocation>
        <location evidence="1">Nucleus</location>
        <location evidence="1">Nucleolus</location>
    </subcellularLocation>
</comment>
<comment type="similarity">
    <text evidence="3">Belongs to the NOP9 family.</text>
</comment>
<name>NOP9_TALMQ</name>
<reference key="1">
    <citation type="journal article" date="2015" name="Genome Announc.">
        <title>Genome sequence of the AIDS-associated pathogen Penicillium marneffei (ATCC18224) and its near taxonomic relative Talaromyces stipitatus (ATCC10500).</title>
        <authorList>
            <person name="Nierman W.C."/>
            <person name="Fedorova-Abrams N.D."/>
            <person name="Andrianopoulos A."/>
        </authorList>
    </citation>
    <scope>NUCLEOTIDE SEQUENCE [LARGE SCALE GENOMIC DNA]</scope>
    <source>
        <strain>ATCC 18224 / CBS 334.59 / QM 7333</strain>
    </source>
</reference>
<sequence>MPREKQKRGRRAQEKEKREENKRKLEDDHEEPALKRQRPSSEDQAEPADYIPLDSGEHEEQEIPVADQNDTPFYGLLDTEEQEYFSRAAEVLELNQFQTAEEQSIFVESVYEEAKGKELKIACSQSCSRLLEKIISLSSTDQRRRLFGKFLGHFLNLVQHRFASHCCETLFVKVAPALSHKTHNAPKKQIIEEEGNEEPSLSLADMFLQVISELEGNWGYLLTERFASHTIRVLLLVLAGEPVDLSSHGSLVASKAKEGVEVHRIEGQERVVSTKHHAVPDAFMDVLKKVMADMTAGLDDTYLRALATHHIGNPVLQLLVSLELSHFGKSTAKDSRSVLRRLIPDDTMEEGSQSAIFFTGLLYDPVGSRLVETIVRSAPGKLFKNIHKNIIRERIASLSRNEIASYVLVRCLERVGRDDLQTDLEMIIPEVPNLIERSRLTVPRALIERCLIRNIDTTPLAKALQESLDKDPAKRLQQLLEVNNTDGPAEEATPSEKPVQGKPKTSPVLLHKSLFVQKMLEAPGALSELVYSGLIATSTDTIINMACNSVTSHVLQKALTAPTSTTQFRRQFIPQFSSHMKQLALDTSGSHLVDALWDATKDIYFVKERLAQELADSEHDLRDSFIGRAVWKNWSMDLYKRRRGEWKGKAKGLDDKVKALNIGGEKPRTKSKLDLARERYDASQKSAADRSSIGTKS</sequence>